<dbReference type="EC" id="3.5.1.108" evidence="1"/>
<dbReference type="EMBL" id="AE006468">
    <property type="protein sequence ID" value="AAL19098.1"/>
    <property type="molecule type" value="Genomic_DNA"/>
</dbReference>
<dbReference type="RefSeq" id="NP_459139.1">
    <property type="nucleotide sequence ID" value="NC_003197.2"/>
</dbReference>
<dbReference type="RefSeq" id="WP_000595487.1">
    <property type="nucleotide sequence ID" value="NC_003197.2"/>
</dbReference>
<dbReference type="SMR" id="Q8ZRT9"/>
<dbReference type="STRING" id="99287.STM0134"/>
<dbReference type="PaxDb" id="99287-STM0134"/>
<dbReference type="GeneID" id="1251652"/>
<dbReference type="KEGG" id="stm:STM0134"/>
<dbReference type="PATRIC" id="fig|99287.12.peg.140"/>
<dbReference type="HOGENOM" id="CLU_046528_1_0_6"/>
<dbReference type="OMA" id="IVFYRSD"/>
<dbReference type="PhylomeDB" id="Q8ZRT9"/>
<dbReference type="BioCyc" id="SENT99287:STM0134-MONOMER"/>
<dbReference type="UniPathway" id="UPA00359">
    <property type="reaction ID" value="UER00478"/>
</dbReference>
<dbReference type="Proteomes" id="UP000001014">
    <property type="component" value="Chromosome"/>
</dbReference>
<dbReference type="GO" id="GO:0016020">
    <property type="term" value="C:membrane"/>
    <property type="evidence" value="ECO:0007669"/>
    <property type="project" value="GOC"/>
</dbReference>
<dbReference type="GO" id="GO:0046872">
    <property type="term" value="F:metal ion binding"/>
    <property type="evidence" value="ECO:0007669"/>
    <property type="project" value="UniProtKB-KW"/>
</dbReference>
<dbReference type="GO" id="GO:0103117">
    <property type="term" value="F:UDP-3-O-acyl-N-acetylglucosamine deacetylase activity"/>
    <property type="evidence" value="ECO:0007669"/>
    <property type="project" value="UniProtKB-UniRule"/>
</dbReference>
<dbReference type="GO" id="GO:0009245">
    <property type="term" value="P:lipid A biosynthetic process"/>
    <property type="evidence" value="ECO:0007669"/>
    <property type="project" value="UniProtKB-UniRule"/>
</dbReference>
<dbReference type="FunFam" id="3.30.1700.10:FF:000001">
    <property type="entry name" value="UDP-3-O-acyl-N-acetylglucosamine deacetylase"/>
    <property type="match status" value="1"/>
</dbReference>
<dbReference type="FunFam" id="3.30.230.20:FF:000001">
    <property type="entry name" value="UDP-3-O-acyl-N-acetylglucosamine deacetylase"/>
    <property type="match status" value="1"/>
</dbReference>
<dbReference type="Gene3D" id="3.30.230.20">
    <property type="entry name" value="lpxc deacetylase, domain 1"/>
    <property type="match status" value="1"/>
</dbReference>
<dbReference type="Gene3D" id="3.30.1700.10">
    <property type="entry name" value="lpxc deacetylase, domain 2"/>
    <property type="match status" value="1"/>
</dbReference>
<dbReference type="HAMAP" id="MF_00388">
    <property type="entry name" value="LpxC"/>
    <property type="match status" value="1"/>
</dbReference>
<dbReference type="InterPro" id="IPR020568">
    <property type="entry name" value="Ribosomal_Su5_D2-typ_SF"/>
</dbReference>
<dbReference type="InterPro" id="IPR004463">
    <property type="entry name" value="UDP-acyl_GlcNac_deAcase"/>
</dbReference>
<dbReference type="InterPro" id="IPR011334">
    <property type="entry name" value="UDP-acyl_GlcNac_deAcase_C"/>
</dbReference>
<dbReference type="InterPro" id="IPR015870">
    <property type="entry name" value="UDP-acyl_N-AcGlcN_deAcase_N"/>
</dbReference>
<dbReference type="NCBIfam" id="TIGR00325">
    <property type="entry name" value="lpxC"/>
    <property type="match status" value="1"/>
</dbReference>
<dbReference type="PANTHER" id="PTHR33694">
    <property type="entry name" value="UDP-3-O-ACYL-N-ACETYLGLUCOSAMINE DEACETYLASE 1, MITOCHONDRIAL-RELATED"/>
    <property type="match status" value="1"/>
</dbReference>
<dbReference type="PANTHER" id="PTHR33694:SF1">
    <property type="entry name" value="UDP-3-O-ACYL-N-ACETYLGLUCOSAMINE DEACETYLASE 1, MITOCHONDRIAL-RELATED"/>
    <property type="match status" value="1"/>
</dbReference>
<dbReference type="Pfam" id="PF03331">
    <property type="entry name" value="LpxC"/>
    <property type="match status" value="1"/>
</dbReference>
<dbReference type="SUPFAM" id="SSF54211">
    <property type="entry name" value="Ribosomal protein S5 domain 2-like"/>
    <property type="match status" value="2"/>
</dbReference>
<sequence length="305" mass="33985">MIKQRTLKRIVQATGVGLHTGKKVTLTLRPAPANTGVIYRRTDLNPPVDFPADAKSVRDTMLCTCLVNEHDVRISTVEHLNAALAGLGIDNIVIEVNAPEIPIMDGSAAPFVYLLLDAGIDELNCAKKFVRIKETVRVEDGDKWAEFRPYNGFTLDFTIDFNHPAIDSSSQRYAMNFSADAFMRQISRARTFGFMRDIEYLQSRGLCLGGSFDCAIVVDDYRVLNEDGLRFEDEFVRHKMLDAIGDLFMCGHNIIGAFTAYKSGHALNNKLLQAVLAKQEAWEFVTFQDDAELPLAFKAPSTVLA</sequence>
<keyword id="KW-0378">Hydrolase</keyword>
<keyword id="KW-0441">Lipid A biosynthesis</keyword>
<keyword id="KW-0444">Lipid biosynthesis</keyword>
<keyword id="KW-0443">Lipid metabolism</keyword>
<keyword id="KW-0479">Metal-binding</keyword>
<keyword id="KW-1185">Reference proteome</keyword>
<keyword id="KW-0862">Zinc</keyword>
<protein>
    <recommendedName>
        <fullName evidence="1">UDP-3-O-acyl-N-acetylglucosamine deacetylase</fullName>
        <shortName evidence="1">UDP-3-O-acyl-GlcNAc deacetylase</shortName>
        <ecNumber evidence="1">3.5.1.108</ecNumber>
    </recommendedName>
    <alternativeName>
        <fullName evidence="1">UDP-3-O-[R-3-hydroxymyristoyl]-N-acetylglucosamine deacetylase</fullName>
    </alternativeName>
</protein>
<feature type="chain" id="PRO_0000191955" description="UDP-3-O-acyl-N-acetylglucosamine deacetylase">
    <location>
        <begin position="1"/>
        <end position="305"/>
    </location>
</feature>
<feature type="active site" description="Proton donor" evidence="1">
    <location>
        <position position="265"/>
    </location>
</feature>
<feature type="binding site" evidence="1">
    <location>
        <position position="79"/>
    </location>
    <ligand>
        <name>Zn(2+)</name>
        <dbReference type="ChEBI" id="CHEBI:29105"/>
    </ligand>
</feature>
<feature type="binding site" evidence="1">
    <location>
        <position position="238"/>
    </location>
    <ligand>
        <name>Zn(2+)</name>
        <dbReference type="ChEBI" id="CHEBI:29105"/>
    </ligand>
</feature>
<feature type="binding site" evidence="1">
    <location>
        <position position="242"/>
    </location>
    <ligand>
        <name>Zn(2+)</name>
        <dbReference type="ChEBI" id="CHEBI:29105"/>
    </ligand>
</feature>
<evidence type="ECO:0000255" key="1">
    <source>
        <dbReference type="HAMAP-Rule" id="MF_00388"/>
    </source>
</evidence>
<name>LPXC_SALTY</name>
<organism>
    <name type="scientific">Salmonella typhimurium (strain LT2 / SGSC1412 / ATCC 700720)</name>
    <dbReference type="NCBI Taxonomy" id="99287"/>
    <lineage>
        <taxon>Bacteria</taxon>
        <taxon>Pseudomonadati</taxon>
        <taxon>Pseudomonadota</taxon>
        <taxon>Gammaproteobacteria</taxon>
        <taxon>Enterobacterales</taxon>
        <taxon>Enterobacteriaceae</taxon>
        <taxon>Salmonella</taxon>
    </lineage>
</organism>
<reference key="1">
    <citation type="journal article" date="2001" name="Nature">
        <title>Complete genome sequence of Salmonella enterica serovar Typhimurium LT2.</title>
        <authorList>
            <person name="McClelland M."/>
            <person name="Sanderson K.E."/>
            <person name="Spieth J."/>
            <person name="Clifton S.W."/>
            <person name="Latreille P."/>
            <person name="Courtney L."/>
            <person name="Porwollik S."/>
            <person name="Ali J."/>
            <person name="Dante M."/>
            <person name="Du F."/>
            <person name="Hou S."/>
            <person name="Layman D."/>
            <person name="Leonard S."/>
            <person name="Nguyen C."/>
            <person name="Scott K."/>
            <person name="Holmes A."/>
            <person name="Grewal N."/>
            <person name="Mulvaney E."/>
            <person name="Ryan E."/>
            <person name="Sun H."/>
            <person name="Florea L."/>
            <person name="Miller W."/>
            <person name="Stoneking T."/>
            <person name="Nhan M."/>
            <person name="Waterston R."/>
            <person name="Wilson R.K."/>
        </authorList>
    </citation>
    <scope>NUCLEOTIDE SEQUENCE [LARGE SCALE GENOMIC DNA]</scope>
    <source>
        <strain>LT2 / SGSC1412 / ATCC 700720</strain>
    </source>
</reference>
<proteinExistence type="inferred from homology"/>
<gene>
    <name evidence="1" type="primary">lpxC</name>
    <name type="ordered locus">STM0134</name>
</gene>
<accession>Q8ZRT9</accession>
<comment type="function">
    <text evidence="1">Catalyzes the hydrolysis of UDP-3-O-myristoyl-N-acetylglucosamine to form UDP-3-O-myristoylglucosamine and acetate, the committed step in lipid A biosynthesis.</text>
</comment>
<comment type="catalytic activity">
    <reaction evidence="1">
        <text>a UDP-3-O-[(3R)-3-hydroxyacyl]-N-acetyl-alpha-D-glucosamine + H2O = a UDP-3-O-[(3R)-3-hydroxyacyl]-alpha-D-glucosamine + acetate</text>
        <dbReference type="Rhea" id="RHEA:67816"/>
        <dbReference type="ChEBI" id="CHEBI:15377"/>
        <dbReference type="ChEBI" id="CHEBI:30089"/>
        <dbReference type="ChEBI" id="CHEBI:137740"/>
        <dbReference type="ChEBI" id="CHEBI:173225"/>
        <dbReference type="EC" id="3.5.1.108"/>
    </reaction>
</comment>
<comment type="cofactor">
    <cofactor evidence="1">
        <name>Zn(2+)</name>
        <dbReference type="ChEBI" id="CHEBI:29105"/>
    </cofactor>
</comment>
<comment type="pathway">
    <text evidence="1">Glycolipid biosynthesis; lipid IV(A) biosynthesis; lipid IV(A) from (3R)-3-hydroxytetradecanoyl-[acyl-carrier-protein] and UDP-N-acetyl-alpha-D-glucosamine: step 2/6.</text>
</comment>
<comment type="similarity">
    <text evidence="1">Belongs to the LpxC family.</text>
</comment>